<feature type="chain" id="PRO_1000071544" description="Lipoprotein signal peptidase">
    <location>
        <begin position="1"/>
        <end position="163"/>
    </location>
</feature>
<feature type="transmembrane region" description="Helical" evidence="1">
    <location>
        <begin position="7"/>
        <end position="27"/>
    </location>
</feature>
<feature type="transmembrane region" description="Helical" evidence="1">
    <location>
        <begin position="64"/>
        <end position="84"/>
    </location>
</feature>
<feature type="transmembrane region" description="Helical" evidence="1">
    <location>
        <begin position="99"/>
        <end position="119"/>
    </location>
</feature>
<feature type="transmembrane region" description="Helical" evidence="1">
    <location>
        <begin position="133"/>
        <end position="153"/>
    </location>
</feature>
<feature type="active site" evidence="1">
    <location>
        <position position="120"/>
    </location>
</feature>
<feature type="active site" evidence="1">
    <location>
        <position position="138"/>
    </location>
</feature>
<evidence type="ECO:0000255" key="1">
    <source>
        <dbReference type="HAMAP-Rule" id="MF_00161"/>
    </source>
</evidence>
<proteinExistence type="inferred from homology"/>
<organism>
    <name type="scientific">Actinobacillus succinogenes (strain ATCC 55618 / DSM 22257 / CCUG 43843 / 130Z)</name>
    <dbReference type="NCBI Taxonomy" id="339671"/>
    <lineage>
        <taxon>Bacteria</taxon>
        <taxon>Pseudomonadati</taxon>
        <taxon>Pseudomonadota</taxon>
        <taxon>Gammaproteobacteria</taxon>
        <taxon>Pasteurellales</taxon>
        <taxon>Pasteurellaceae</taxon>
        <taxon>Actinobacillus</taxon>
    </lineage>
</organism>
<protein>
    <recommendedName>
        <fullName evidence="1">Lipoprotein signal peptidase</fullName>
        <ecNumber evidence="1">3.4.23.36</ecNumber>
    </recommendedName>
    <alternativeName>
        <fullName evidence="1">Prolipoprotein signal peptidase</fullName>
    </alternativeName>
    <alternativeName>
        <fullName evidence="1">Signal peptidase II</fullName>
        <shortName evidence="1">SPase II</shortName>
    </alternativeName>
</protein>
<name>LSPA_ACTSZ</name>
<accession>A6VQH9</accession>
<reference key="1">
    <citation type="journal article" date="2010" name="BMC Genomics">
        <title>A genomic perspective on the potential of Actinobacillus succinogenes for industrial succinate production.</title>
        <authorList>
            <person name="McKinlay J.B."/>
            <person name="Laivenieks M."/>
            <person name="Schindler B.D."/>
            <person name="McKinlay A.A."/>
            <person name="Siddaramappa S."/>
            <person name="Challacombe J.F."/>
            <person name="Lowry S.R."/>
            <person name="Clum A."/>
            <person name="Lapidus A.L."/>
            <person name="Burkhart K.B."/>
            <person name="Harkins V."/>
            <person name="Vieille C."/>
        </authorList>
    </citation>
    <scope>NUCLEOTIDE SEQUENCE [LARGE SCALE GENOMIC DNA]</scope>
    <source>
        <strain>ATCC 55618 / DSM 22257 / CCUG 43843 / 130Z</strain>
    </source>
</reference>
<sequence>MKKKSGLSFLWLSAVAFVIDLLTKYLVTQNFELYESVNILPVFNLTYARNTGAAFSFLAEHGGWQKYFFIALALIISAVLVYLLRKNSARQKLQNSAYALIIGGALANMADRAYHGFVVDFFDFYWREWHYPVFNVADIAICVGVGLLILDSFKNGEKKANEQ</sequence>
<comment type="function">
    <text evidence="1">This protein specifically catalyzes the removal of signal peptides from prolipoproteins.</text>
</comment>
<comment type="catalytic activity">
    <reaction evidence="1">
        <text>Release of signal peptides from bacterial membrane prolipoproteins. Hydrolyzes -Xaa-Yaa-Zaa-|-(S,diacylglyceryl)Cys-, in which Xaa is hydrophobic (preferably Leu), and Yaa (Ala or Ser) and Zaa (Gly or Ala) have small, neutral side chains.</text>
        <dbReference type="EC" id="3.4.23.36"/>
    </reaction>
</comment>
<comment type="pathway">
    <text evidence="1">Protein modification; lipoprotein biosynthesis (signal peptide cleavage).</text>
</comment>
<comment type="subcellular location">
    <subcellularLocation>
        <location evidence="1">Cell inner membrane</location>
        <topology evidence="1">Multi-pass membrane protein</topology>
    </subcellularLocation>
</comment>
<comment type="similarity">
    <text evidence="1">Belongs to the peptidase A8 family.</text>
</comment>
<gene>
    <name evidence="1" type="primary">lspA</name>
    <name type="ordered locus">Asuc_1875</name>
</gene>
<keyword id="KW-0064">Aspartyl protease</keyword>
<keyword id="KW-0997">Cell inner membrane</keyword>
<keyword id="KW-1003">Cell membrane</keyword>
<keyword id="KW-0378">Hydrolase</keyword>
<keyword id="KW-0472">Membrane</keyword>
<keyword id="KW-0645">Protease</keyword>
<keyword id="KW-1185">Reference proteome</keyword>
<keyword id="KW-0812">Transmembrane</keyword>
<keyword id="KW-1133">Transmembrane helix</keyword>
<dbReference type="EC" id="3.4.23.36" evidence="1"/>
<dbReference type="EMBL" id="CP000746">
    <property type="protein sequence ID" value="ABR75226.1"/>
    <property type="molecule type" value="Genomic_DNA"/>
</dbReference>
<dbReference type="RefSeq" id="WP_012073603.1">
    <property type="nucleotide sequence ID" value="NC_009655.1"/>
</dbReference>
<dbReference type="SMR" id="A6VQH9"/>
<dbReference type="STRING" id="339671.Asuc_1875"/>
<dbReference type="MEROPS" id="A08.001"/>
<dbReference type="KEGG" id="asu:Asuc_1875"/>
<dbReference type="eggNOG" id="COG0597">
    <property type="taxonomic scope" value="Bacteria"/>
</dbReference>
<dbReference type="HOGENOM" id="CLU_083252_4_0_6"/>
<dbReference type="OrthoDB" id="9810259at2"/>
<dbReference type="UniPathway" id="UPA00665"/>
<dbReference type="Proteomes" id="UP000001114">
    <property type="component" value="Chromosome"/>
</dbReference>
<dbReference type="GO" id="GO:0005886">
    <property type="term" value="C:plasma membrane"/>
    <property type="evidence" value="ECO:0007669"/>
    <property type="project" value="UniProtKB-SubCell"/>
</dbReference>
<dbReference type="GO" id="GO:0004190">
    <property type="term" value="F:aspartic-type endopeptidase activity"/>
    <property type="evidence" value="ECO:0007669"/>
    <property type="project" value="UniProtKB-UniRule"/>
</dbReference>
<dbReference type="GO" id="GO:0006508">
    <property type="term" value="P:proteolysis"/>
    <property type="evidence" value="ECO:0007669"/>
    <property type="project" value="UniProtKB-KW"/>
</dbReference>
<dbReference type="HAMAP" id="MF_00161">
    <property type="entry name" value="LspA"/>
    <property type="match status" value="1"/>
</dbReference>
<dbReference type="InterPro" id="IPR001872">
    <property type="entry name" value="Peptidase_A8"/>
</dbReference>
<dbReference type="NCBIfam" id="TIGR00077">
    <property type="entry name" value="lspA"/>
    <property type="match status" value="1"/>
</dbReference>
<dbReference type="PANTHER" id="PTHR33695">
    <property type="entry name" value="LIPOPROTEIN SIGNAL PEPTIDASE"/>
    <property type="match status" value="1"/>
</dbReference>
<dbReference type="PANTHER" id="PTHR33695:SF1">
    <property type="entry name" value="LIPOPROTEIN SIGNAL PEPTIDASE"/>
    <property type="match status" value="1"/>
</dbReference>
<dbReference type="Pfam" id="PF01252">
    <property type="entry name" value="Peptidase_A8"/>
    <property type="match status" value="1"/>
</dbReference>
<dbReference type="PRINTS" id="PR00781">
    <property type="entry name" value="LIPOSIGPTASE"/>
</dbReference>